<sequence length="510" mass="55966">MKLKPIEVAEILQKEIANINCLSELEEVGQVITVGDGIAQIYGLANVKSGEVVEFKSGVKGLVLNLENDSVGAVIMGDDNQVQQGDNVKRTKEVLEVPVGKALLGRVVDALGNPIDGKGDIASKEYRHIEMKAPGIIERTSVSEPVQTGIKAIDSLIPIGRGQRELIIGDRQTGKTAIAVDTIINQKQAHSLTNESDKIYCIYVAIGQKRSSVAQIVKKLEDAGAMDYTLIVSATASEAAALQFIAPYSACSMGEYFRDNGMHALIIYDDLSKHAVAYRQISLLLRRPPGREAYPGDVFYLHSRLLERAAKMSEAKGSGSLTALPIIETQAGDVSAYIPTNVISITDGQIFLESELFYKGVRPAVNVGISVSRVGSAAQIKAMKQVAGSVKLELAQFRELESFSQFGSDLDPATKVQIDHGKRLVEILKQAQYHPFPVEEQIVSIYVGTKKYLNDVPLQQVKEFEDKMLTEIRLNKKDILESIKNEQCITEETEQKLKAFLENFVKEFVK</sequence>
<reference key="1">
    <citation type="journal article" date="2009" name="PLoS ONE">
        <title>Genome sequence of the endosymbiont Rickettsia peacockii and comparison with virulent Rickettsia rickettsii: identification of virulence factors.</title>
        <authorList>
            <person name="Felsheim R.F."/>
            <person name="Kurtti T.J."/>
            <person name="Munderloh U.G."/>
        </authorList>
    </citation>
    <scope>NUCLEOTIDE SEQUENCE [LARGE SCALE GENOMIC DNA]</scope>
    <source>
        <strain>Rustic</strain>
    </source>
</reference>
<gene>
    <name evidence="1" type="primary">atpA</name>
    <name type="ordered locus">RPR_04930</name>
</gene>
<accession>C4K229</accession>
<comment type="function">
    <text evidence="1">Produces ATP from ADP in the presence of a proton gradient across the membrane. The alpha chain is a regulatory subunit.</text>
</comment>
<comment type="catalytic activity">
    <reaction evidence="1">
        <text>ATP + H2O + 4 H(+)(in) = ADP + phosphate + 5 H(+)(out)</text>
        <dbReference type="Rhea" id="RHEA:57720"/>
        <dbReference type="ChEBI" id="CHEBI:15377"/>
        <dbReference type="ChEBI" id="CHEBI:15378"/>
        <dbReference type="ChEBI" id="CHEBI:30616"/>
        <dbReference type="ChEBI" id="CHEBI:43474"/>
        <dbReference type="ChEBI" id="CHEBI:456216"/>
        <dbReference type="EC" id="7.1.2.2"/>
    </reaction>
</comment>
<comment type="subunit">
    <text evidence="1">F-type ATPases have 2 components, CF(1) - the catalytic core - and CF(0) - the membrane proton channel. CF(1) has five subunits: alpha(3), beta(3), gamma(1), delta(1), epsilon(1). CF(0) has three main subunits: a(1), b(2) and c(9-12). The alpha and beta chains form an alternating ring which encloses part of the gamma chain. CF(1) is attached to CF(0) by a central stalk formed by the gamma and epsilon chains, while a peripheral stalk is formed by the delta and b chains.</text>
</comment>
<comment type="subcellular location">
    <subcellularLocation>
        <location evidence="1">Cell inner membrane</location>
        <topology evidence="1">Peripheral membrane protein</topology>
    </subcellularLocation>
</comment>
<comment type="similarity">
    <text evidence="1">Belongs to the ATPase alpha/beta chains family.</text>
</comment>
<protein>
    <recommendedName>
        <fullName evidence="1">ATP synthase subunit alpha</fullName>
        <ecNumber evidence="1">7.1.2.2</ecNumber>
    </recommendedName>
    <alternativeName>
        <fullName evidence="1">ATP synthase F1 sector subunit alpha</fullName>
    </alternativeName>
    <alternativeName>
        <fullName evidence="1">F-ATPase subunit alpha</fullName>
    </alternativeName>
</protein>
<evidence type="ECO:0000255" key="1">
    <source>
        <dbReference type="HAMAP-Rule" id="MF_01346"/>
    </source>
</evidence>
<proteinExistence type="inferred from homology"/>
<feature type="chain" id="PRO_1000214816" description="ATP synthase subunit alpha">
    <location>
        <begin position="1"/>
        <end position="510"/>
    </location>
</feature>
<feature type="binding site" evidence="1">
    <location>
        <begin position="169"/>
        <end position="176"/>
    </location>
    <ligand>
        <name>ATP</name>
        <dbReference type="ChEBI" id="CHEBI:30616"/>
    </ligand>
</feature>
<feature type="site" description="Required for activity" evidence="1">
    <location>
        <position position="370"/>
    </location>
</feature>
<keyword id="KW-0066">ATP synthesis</keyword>
<keyword id="KW-0067">ATP-binding</keyword>
<keyword id="KW-0997">Cell inner membrane</keyword>
<keyword id="KW-1003">Cell membrane</keyword>
<keyword id="KW-0139">CF(1)</keyword>
<keyword id="KW-0375">Hydrogen ion transport</keyword>
<keyword id="KW-0406">Ion transport</keyword>
<keyword id="KW-0472">Membrane</keyword>
<keyword id="KW-0547">Nucleotide-binding</keyword>
<keyword id="KW-1278">Translocase</keyword>
<keyword id="KW-0813">Transport</keyword>
<organism>
    <name type="scientific">Rickettsia peacockii (strain Rustic)</name>
    <dbReference type="NCBI Taxonomy" id="562019"/>
    <lineage>
        <taxon>Bacteria</taxon>
        <taxon>Pseudomonadati</taxon>
        <taxon>Pseudomonadota</taxon>
        <taxon>Alphaproteobacteria</taxon>
        <taxon>Rickettsiales</taxon>
        <taxon>Rickettsiaceae</taxon>
        <taxon>Rickettsieae</taxon>
        <taxon>Rickettsia</taxon>
        <taxon>spotted fever group</taxon>
    </lineage>
</organism>
<name>ATPA_RICPU</name>
<dbReference type="EC" id="7.1.2.2" evidence="1"/>
<dbReference type="EMBL" id="CP001227">
    <property type="protein sequence ID" value="ACR47627.1"/>
    <property type="molecule type" value="Genomic_DNA"/>
</dbReference>
<dbReference type="RefSeq" id="WP_012736839.1">
    <property type="nucleotide sequence ID" value="NC_012730.1"/>
</dbReference>
<dbReference type="SMR" id="C4K229"/>
<dbReference type="KEGG" id="rpk:RPR_04930"/>
<dbReference type="HOGENOM" id="CLU_010091_2_1_5"/>
<dbReference type="Proteomes" id="UP000005015">
    <property type="component" value="Chromosome"/>
</dbReference>
<dbReference type="GO" id="GO:0005886">
    <property type="term" value="C:plasma membrane"/>
    <property type="evidence" value="ECO:0007669"/>
    <property type="project" value="UniProtKB-SubCell"/>
</dbReference>
<dbReference type="GO" id="GO:0045259">
    <property type="term" value="C:proton-transporting ATP synthase complex"/>
    <property type="evidence" value="ECO:0007669"/>
    <property type="project" value="UniProtKB-KW"/>
</dbReference>
<dbReference type="GO" id="GO:0043531">
    <property type="term" value="F:ADP binding"/>
    <property type="evidence" value="ECO:0007669"/>
    <property type="project" value="TreeGrafter"/>
</dbReference>
<dbReference type="GO" id="GO:0005524">
    <property type="term" value="F:ATP binding"/>
    <property type="evidence" value="ECO:0007669"/>
    <property type="project" value="UniProtKB-UniRule"/>
</dbReference>
<dbReference type="GO" id="GO:0046933">
    <property type="term" value="F:proton-transporting ATP synthase activity, rotational mechanism"/>
    <property type="evidence" value="ECO:0007669"/>
    <property type="project" value="UniProtKB-UniRule"/>
</dbReference>
<dbReference type="CDD" id="cd18113">
    <property type="entry name" value="ATP-synt_F1_alpha_C"/>
    <property type="match status" value="1"/>
</dbReference>
<dbReference type="CDD" id="cd18116">
    <property type="entry name" value="ATP-synt_F1_alpha_N"/>
    <property type="match status" value="1"/>
</dbReference>
<dbReference type="CDD" id="cd01132">
    <property type="entry name" value="F1-ATPase_alpha_CD"/>
    <property type="match status" value="1"/>
</dbReference>
<dbReference type="FunFam" id="1.20.150.20:FF:000001">
    <property type="entry name" value="ATP synthase subunit alpha"/>
    <property type="match status" value="1"/>
</dbReference>
<dbReference type="FunFam" id="2.40.30.20:FF:000001">
    <property type="entry name" value="ATP synthase subunit alpha"/>
    <property type="match status" value="1"/>
</dbReference>
<dbReference type="FunFam" id="3.40.50.300:FF:002432">
    <property type="entry name" value="ATP synthase subunit alpha, mitochondrial"/>
    <property type="match status" value="1"/>
</dbReference>
<dbReference type="Gene3D" id="2.40.30.20">
    <property type="match status" value="1"/>
</dbReference>
<dbReference type="Gene3D" id="1.20.150.20">
    <property type="entry name" value="ATP synthase alpha/beta chain, C-terminal domain"/>
    <property type="match status" value="1"/>
</dbReference>
<dbReference type="Gene3D" id="3.40.50.300">
    <property type="entry name" value="P-loop containing nucleotide triphosphate hydrolases"/>
    <property type="match status" value="1"/>
</dbReference>
<dbReference type="HAMAP" id="MF_01346">
    <property type="entry name" value="ATP_synth_alpha_bact"/>
    <property type="match status" value="1"/>
</dbReference>
<dbReference type="InterPro" id="IPR023366">
    <property type="entry name" value="ATP_synth_asu-like_sf"/>
</dbReference>
<dbReference type="InterPro" id="IPR000793">
    <property type="entry name" value="ATP_synth_asu_C"/>
</dbReference>
<dbReference type="InterPro" id="IPR038376">
    <property type="entry name" value="ATP_synth_asu_C_sf"/>
</dbReference>
<dbReference type="InterPro" id="IPR033732">
    <property type="entry name" value="ATP_synth_F1_a_nt-bd_dom"/>
</dbReference>
<dbReference type="InterPro" id="IPR005294">
    <property type="entry name" value="ATP_synth_F1_asu"/>
</dbReference>
<dbReference type="InterPro" id="IPR020003">
    <property type="entry name" value="ATPase_a/bsu_AS"/>
</dbReference>
<dbReference type="InterPro" id="IPR004100">
    <property type="entry name" value="ATPase_F1/V1/A1_a/bsu_N"/>
</dbReference>
<dbReference type="InterPro" id="IPR036121">
    <property type="entry name" value="ATPase_F1/V1/A1_a/bsu_N_sf"/>
</dbReference>
<dbReference type="InterPro" id="IPR000194">
    <property type="entry name" value="ATPase_F1/V1/A1_a/bsu_nucl-bd"/>
</dbReference>
<dbReference type="InterPro" id="IPR027417">
    <property type="entry name" value="P-loop_NTPase"/>
</dbReference>
<dbReference type="NCBIfam" id="TIGR00962">
    <property type="entry name" value="atpA"/>
    <property type="match status" value="1"/>
</dbReference>
<dbReference type="NCBIfam" id="NF009884">
    <property type="entry name" value="PRK13343.1"/>
    <property type="match status" value="1"/>
</dbReference>
<dbReference type="PANTHER" id="PTHR48082">
    <property type="entry name" value="ATP SYNTHASE SUBUNIT ALPHA, MITOCHONDRIAL"/>
    <property type="match status" value="1"/>
</dbReference>
<dbReference type="PANTHER" id="PTHR48082:SF2">
    <property type="entry name" value="ATP SYNTHASE SUBUNIT ALPHA, MITOCHONDRIAL"/>
    <property type="match status" value="1"/>
</dbReference>
<dbReference type="Pfam" id="PF00006">
    <property type="entry name" value="ATP-synt_ab"/>
    <property type="match status" value="1"/>
</dbReference>
<dbReference type="Pfam" id="PF00306">
    <property type="entry name" value="ATP-synt_ab_C"/>
    <property type="match status" value="1"/>
</dbReference>
<dbReference type="Pfam" id="PF02874">
    <property type="entry name" value="ATP-synt_ab_N"/>
    <property type="match status" value="1"/>
</dbReference>
<dbReference type="PIRSF" id="PIRSF039088">
    <property type="entry name" value="F_ATPase_subunit_alpha"/>
    <property type="match status" value="1"/>
</dbReference>
<dbReference type="SUPFAM" id="SSF47917">
    <property type="entry name" value="C-terminal domain of alpha and beta subunits of F1 ATP synthase"/>
    <property type="match status" value="1"/>
</dbReference>
<dbReference type="SUPFAM" id="SSF50615">
    <property type="entry name" value="N-terminal domain of alpha and beta subunits of F1 ATP synthase"/>
    <property type="match status" value="1"/>
</dbReference>
<dbReference type="SUPFAM" id="SSF52540">
    <property type="entry name" value="P-loop containing nucleoside triphosphate hydrolases"/>
    <property type="match status" value="1"/>
</dbReference>
<dbReference type="PROSITE" id="PS00152">
    <property type="entry name" value="ATPASE_ALPHA_BETA"/>
    <property type="match status" value="1"/>
</dbReference>